<sequence length="508" mass="57224">MALIFAVFFKKIVIDRQIEKLNDLEDEVEKAKLKAKEIVEEAERDAVSKAKEIELKAKEKAYQIKEEIEKEARNSKNEIAQKEARIIKKEEILDGKIEKIEIKSLELEKINDELEEKRKEIDDLRVKQEEELSRVSELTKADAREILLRKVREEMTHDMAITIREFENKLDEEKEKISQKILSTAIGKAAADYVADATVSVINLPNDEMKGRIIGREGRNIRTIEALTGVDVIIDDTPEAVVLSCFDGVKREVARLTIEKLITDGRIHPGKIEEIVNKCKKDIEKEIVAAGEEALIELSIPTMHPEIIKTLGRLKYRTSYGQNVLTHSIEVAKIASTMAAEIGANVELAKRGGLLHDIGKVLVNEIETSHAIVGGEFIKKFGEKQDVINAVMAHHNEVEFETVEAILVQAADAVSASRPGARRETLTAYIKRLENLEEIANSFEGVESSYAIQAGRELRIVINPDKVSDDEATLMSREVAKKIEDTMQYPGQIKVTILRETRAVEYAK</sequence>
<reference key="1">
    <citation type="journal article" date="2002" name="J. Bacteriol.">
        <title>Genome sequence and analysis of the oral bacterium Fusobacterium nucleatum strain ATCC 25586.</title>
        <authorList>
            <person name="Kapatral V."/>
            <person name="Anderson I."/>
            <person name="Ivanova N."/>
            <person name="Reznik G."/>
            <person name="Los T."/>
            <person name="Lykidis A."/>
            <person name="Bhattacharyya A."/>
            <person name="Bartman A."/>
            <person name="Gardner W."/>
            <person name="Grechkin G."/>
            <person name="Zhu L."/>
            <person name="Vasieva O."/>
            <person name="Chu L."/>
            <person name="Kogan Y."/>
            <person name="Chaga O."/>
            <person name="Goltsman E."/>
            <person name="Bernal A."/>
            <person name="Larsen N."/>
            <person name="D'Souza M."/>
            <person name="Walunas T."/>
            <person name="Pusch G."/>
            <person name="Haselkorn R."/>
            <person name="Fonstein M."/>
            <person name="Kyrpides N.C."/>
            <person name="Overbeek R."/>
        </authorList>
    </citation>
    <scope>NUCLEOTIDE SEQUENCE [LARGE SCALE GENOMIC DNA]</scope>
    <source>
        <strain>ATCC 25586 / DSM 15643 / BCRC 10681 / CIP 101130 / JCM 8532 / KCTC 2640 / LMG 13131 / VPI 4355</strain>
    </source>
</reference>
<feature type="chain" id="PRO_0000163773" description="Ribonuclease Y">
    <location>
        <begin position="1"/>
        <end position="508"/>
    </location>
</feature>
<feature type="domain" description="KH" evidence="1">
    <location>
        <begin position="198"/>
        <end position="264"/>
    </location>
</feature>
<feature type="domain" description="HD" evidence="2">
    <location>
        <begin position="324"/>
        <end position="417"/>
    </location>
</feature>
<proteinExistence type="inferred from homology"/>
<gene>
    <name evidence="1" type="primary">rny</name>
    <name type="ordered locus">FN1913</name>
</gene>
<comment type="function">
    <text evidence="1">Endoribonuclease that initiates mRNA decay.</text>
</comment>
<comment type="similarity">
    <text evidence="1">Belongs to the RNase Y family.</text>
</comment>
<accession>Q8RHT2</accession>
<keyword id="KW-0255">Endonuclease</keyword>
<keyword id="KW-0378">Hydrolase</keyword>
<keyword id="KW-0540">Nuclease</keyword>
<keyword id="KW-1185">Reference proteome</keyword>
<keyword id="KW-0694">RNA-binding</keyword>
<organism>
    <name type="scientific">Fusobacterium nucleatum subsp. nucleatum (strain ATCC 25586 / DSM 15643 / BCRC 10681 / CIP 101130 / JCM 8532 / KCTC 2640 / LMG 13131 / VPI 4355)</name>
    <dbReference type="NCBI Taxonomy" id="190304"/>
    <lineage>
        <taxon>Bacteria</taxon>
        <taxon>Fusobacteriati</taxon>
        <taxon>Fusobacteriota</taxon>
        <taxon>Fusobacteriia</taxon>
        <taxon>Fusobacteriales</taxon>
        <taxon>Fusobacteriaceae</taxon>
        <taxon>Fusobacterium</taxon>
    </lineage>
</organism>
<name>RNY_FUSNN</name>
<protein>
    <recommendedName>
        <fullName evidence="1">Ribonuclease Y</fullName>
        <shortName evidence="1">RNase Y</shortName>
        <ecNumber evidence="1">3.1.-.-</ecNumber>
    </recommendedName>
</protein>
<dbReference type="EC" id="3.1.-.-" evidence="1"/>
<dbReference type="EMBL" id="AE009951">
    <property type="protein sequence ID" value="AAL94012.1"/>
    <property type="molecule type" value="Genomic_DNA"/>
</dbReference>
<dbReference type="RefSeq" id="NP_602713.1">
    <property type="nucleotide sequence ID" value="NC_003454.1"/>
</dbReference>
<dbReference type="SMR" id="Q8RHT2"/>
<dbReference type="FunCoup" id="Q8RHT2">
    <property type="interactions" value="88"/>
</dbReference>
<dbReference type="STRING" id="190304.FN1913"/>
<dbReference type="PaxDb" id="190304-FN1913"/>
<dbReference type="EnsemblBacteria" id="AAL94012">
    <property type="protein sequence ID" value="AAL94012"/>
    <property type="gene ID" value="FN1913"/>
</dbReference>
<dbReference type="KEGG" id="fnu:FN1913"/>
<dbReference type="PATRIC" id="fig|190304.8.peg.388"/>
<dbReference type="eggNOG" id="COG1418">
    <property type="taxonomic scope" value="Bacteria"/>
</dbReference>
<dbReference type="HOGENOM" id="CLU_028328_1_0_0"/>
<dbReference type="InParanoid" id="Q8RHT2"/>
<dbReference type="BioCyc" id="FNUC190304:G1FZS-407-MONOMER"/>
<dbReference type="Proteomes" id="UP000002521">
    <property type="component" value="Chromosome"/>
</dbReference>
<dbReference type="GO" id="GO:0005886">
    <property type="term" value="C:plasma membrane"/>
    <property type="evidence" value="ECO:0007669"/>
    <property type="project" value="UniProtKB-UniRule"/>
</dbReference>
<dbReference type="GO" id="GO:0003723">
    <property type="term" value="F:RNA binding"/>
    <property type="evidence" value="ECO:0007669"/>
    <property type="project" value="UniProtKB-UniRule"/>
</dbReference>
<dbReference type="GO" id="GO:0004521">
    <property type="term" value="F:RNA endonuclease activity"/>
    <property type="evidence" value="ECO:0007669"/>
    <property type="project" value="UniProtKB-UniRule"/>
</dbReference>
<dbReference type="GO" id="GO:0006402">
    <property type="term" value="P:mRNA catabolic process"/>
    <property type="evidence" value="ECO:0007669"/>
    <property type="project" value="UniProtKB-UniRule"/>
</dbReference>
<dbReference type="CDD" id="cd00077">
    <property type="entry name" value="HDc"/>
    <property type="match status" value="1"/>
</dbReference>
<dbReference type="CDD" id="cd22431">
    <property type="entry name" value="KH-I_RNaseY"/>
    <property type="match status" value="1"/>
</dbReference>
<dbReference type="FunFam" id="1.10.3210.10:FF:000013">
    <property type="entry name" value="Ribonuclease Y"/>
    <property type="match status" value="1"/>
</dbReference>
<dbReference type="Gene3D" id="1.10.3210.10">
    <property type="entry name" value="Hypothetical protein af1432"/>
    <property type="match status" value="1"/>
</dbReference>
<dbReference type="Gene3D" id="3.30.1370.10">
    <property type="entry name" value="K Homology domain, type 1"/>
    <property type="match status" value="1"/>
</dbReference>
<dbReference type="HAMAP" id="MF_00335">
    <property type="entry name" value="RNase_Y"/>
    <property type="match status" value="1"/>
</dbReference>
<dbReference type="InterPro" id="IPR003607">
    <property type="entry name" value="HD/PDEase_dom"/>
</dbReference>
<dbReference type="InterPro" id="IPR006674">
    <property type="entry name" value="HD_domain"/>
</dbReference>
<dbReference type="InterPro" id="IPR006675">
    <property type="entry name" value="HDIG_dom"/>
</dbReference>
<dbReference type="InterPro" id="IPR004087">
    <property type="entry name" value="KH_dom"/>
</dbReference>
<dbReference type="InterPro" id="IPR004088">
    <property type="entry name" value="KH_dom_type_1"/>
</dbReference>
<dbReference type="InterPro" id="IPR036612">
    <property type="entry name" value="KH_dom_type_1_sf"/>
</dbReference>
<dbReference type="InterPro" id="IPR017705">
    <property type="entry name" value="Ribonuclease_Y"/>
</dbReference>
<dbReference type="InterPro" id="IPR022711">
    <property type="entry name" value="RNase_Y_N"/>
</dbReference>
<dbReference type="NCBIfam" id="TIGR00277">
    <property type="entry name" value="HDIG"/>
    <property type="match status" value="1"/>
</dbReference>
<dbReference type="NCBIfam" id="TIGR03319">
    <property type="entry name" value="RNase_Y"/>
    <property type="match status" value="1"/>
</dbReference>
<dbReference type="PANTHER" id="PTHR12826">
    <property type="entry name" value="RIBONUCLEASE Y"/>
    <property type="match status" value="1"/>
</dbReference>
<dbReference type="PANTHER" id="PTHR12826:SF15">
    <property type="entry name" value="RIBONUCLEASE Y"/>
    <property type="match status" value="1"/>
</dbReference>
<dbReference type="Pfam" id="PF01966">
    <property type="entry name" value="HD"/>
    <property type="match status" value="1"/>
</dbReference>
<dbReference type="Pfam" id="PF00013">
    <property type="entry name" value="KH_1"/>
    <property type="match status" value="1"/>
</dbReference>
<dbReference type="Pfam" id="PF12072">
    <property type="entry name" value="RNase_Y_N"/>
    <property type="match status" value="1"/>
</dbReference>
<dbReference type="SMART" id="SM00471">
    <property type="entry name" value="HDc"/>
    <property type="match status" value="1"/>
</dbReference>
<dbReference type="SMART" id="SM00322">
    <property type="entry name" value="KH"/>
    <property type="match status" value="1"/>
</dbReference>
<dbReference type="SUPFAM" id="SSF54791">
    <property type="entry name" value="Eukaryotic type KH-domain (KH-domain type I)"/>
    <property type="match status" value="1"/>
</dbReference>
<dbReference type="SUPFAM" id="SSF109604">
    <property type="entry name" value="HD-domain/PDEase-like"/>
    <property type="match status" value="1"/>
</dbReference>
<dbReference type="PROSITE" id="PS51831">
    <property type="entry name" value="HD"/>
    <property type="match status" value="1"/>
</dbReference>
<dbReference type="PROSITE" id="PS50084">
    <property type="entry name" value="KH_TYPE_1"/>
    <property type="match status" value="1"/>
</dbReference>
<evidence type="ECO:0000255" key="1">
    <source>
        <dbReference type="HAMAP-Rule" id="MF_00335"/>
    </source>
</evidence>
<evidence type="ECO:0000255" key="2">
    <source>
        <dbReference type="PROSITE-ProRule" id="PRU01175"/>
    </source>
</evidence>